<dbReference type="EC" id="2.7.1.148" evidence="1"/>
<dbReference type="EMBL" id="AE017220">
    <property type="protein sequence ID" value="AAX65679.1"/>
    <property type="molecule type" value="Genomic_DNA"/>
</dbReference>
<dbReference type="RefSeq" id="WP_001540180.1">
    <property type="nucleotide sequence ID" value="NC_006905.1"/>
</dbReference>
<dbReference type="SMR" id="Q57NN2"/>
<dbReference type="KEGG" id="sec:SCH_1773"/>
<dbReference type="HOGENOM" id="CLU_053057_3_0_6"/>
<dbReference type="UniPathway" id="UPA00056">
    <property type="reaction ID" value="UER00094"/>
</dbReference>
<dbReference type="Proteomes" id="UP000000538">
    <property type="component" value="Chromosome"/>
</dbReference>
<dbReference type="GO" id="GO:0050515">
    <property type="term" value="F:4-(cytidine 5'-diphospho)-2-C-methyl-D-erythritol kinase activity"/>
    <property type="evidence" value="ECO:0007669"/>
    <property type="project" value="UniProtKB-UniRule"/>
</dbReference>
<dbReference type="GO" id="GO:0005524">
    <property type="term" value="F:ATP binding"/>
    <property type="evidence" value="ECO:0007669"/>
    <property type="project" value="UniProtKB-UniRule"/>
</dbReference>
<dbReference type="GO" id="GO:0019288">
    <property type="term" value="P:isopentenyl diphosphate biosynthetic process, methylerythritol 4-phosphate pathway"/>
    <property type="evidence" value="ECO:0007669"/>
    <property type="project" value="UniProtKB-UniRule"/>
</dbReference>
<dbReference type="GO" id="GO:0016114">
    <property type="term" value="P:terpenoid biosynthetic process"/>
    <property type="evidence" value="ECO:0007669"/>
    <property type="project" value="InterPro"/>
</dbReference>
<dbReference type="FunFam" id="3.30.230.10:FF:000022">
    <property type="entry name" value="4-diphosphocytidyl-2-C-methyl-D-erythritol kinase"/>
    <property type="match status" value="1"/>
</dbReference>
<dbReference type="FunFam" id="3.30.70.890:FF:000004">
    <property type="entry name" value="4-diphosphocytidyl-2-C-methyl-D-erythritol kinase"/>
    <property type="match status" value="1"/>
</dbReference>
<dbReference type="Gene3D" id="3.30.230.10">
    <property type="match status" value="1"/>
</dbReference>
<dbReference type="Gene3D" id="3.30.70.890">
    <property type="entry name" value="GHMP kinase, C-terminal domain"/>
    <property type="match status" value="1"/>
</dbReference>
<dbReference type="HAMAP" id="MF_00061">
    <property type="entry name" value="IspE"/>
    <property type="match status" value="1"/>
</dbReference>
<dbReference type="InterPro" id="IPR013750">
    <property type="entry name" value="GHMP_kinase_C_dom"/>
</dbReference>
<dbReference type="InterPro" id="IPR036554">
    <property type="entry name" value="GHMP_kinase_C_sf"/>
</dbReference>
<dbReference type="InterPro" id="IPR006204">
    <property type="entry name" value="GHMP_kinase_N_dom"/>
</dbReference>
<dbReference type="InterPro" id="IPR004424">
    <property type="entry name" value="IspE"/>
</dbReference>
<dbReference type="InterPro" id="IPR020568">
    <property type="entry name" value="Ribosomal_Su5_D2-typ_SF"/>
</dbReference>
<dbReference type="InterPro" id="IPR014721">
    <property type="entry name" value="Ribsml_uS5_D2-typ_fold_subgr"/>
</dbReference>
<dbReference type="NCBIfam" id="TIGR00154">
    <property type="entry name" value="ispE"/>
    <property type="match status" value="1"/>
</dbReference>
<dbReference type="PANTHER" id="PTHR43527">
    <property type="entry name" value="4-DIPHOSPHOCYTIDYL-2-C-METHYL-D-ERYTHRITOL KINASE, CHLOROPLASTIC"/>
    <property type="match status" value="1"/>
</dbReference>
<dbReference type="PANTHER" id="PTHR43527:SF2">
    <property type="entry name" value="4-DIPHOSPHOCYTIDYL-2-C-METHYL-D-ERYTHRITOL KINASE, CHLOROPLASTIC"/>
    <property type="match status" value="1"/>
</dbReference>
<dbReference type="Pfam" id="PF08544">
    <property type="entry name" value="GHMP_kinases_C"/>
    <property type="match status" value="1"/>
</dbReference>
<dbReference type="Pfam" id="PF00288">
    <property type="entry name" value="GHMP_kinases_N"/>
    <property type="match status" value="1"/>
</dbReference>
<dbReference type="PIRSF" id="PIRSF010376">
    <property type="entry name" value="IspE"/>
    <property type="match status" value="1"/>
</dbReference>
<dbReference type="SUPFAM" id="SSF55060">
    <property type="entry name" value="GHMP Kinase, C-terminal domain"/>
    <property type="match status" value="1"/>
</dbReference>
<dbReference type="SUPFAM" id="SSF54211">
    <property type="entry name" value="Ribosomal protein S5 domain 2-like"/>
    <property type="match status" value="1"/>
</dbReference>
<feature type="chain" id="PRO_0000235127" description="4-diphosphocytidyl-2-C-methyl-D-erythritol kinase">
    <location>
        <begin position="1"/>
        <end position="283"/>
    </location>
</feature>
<feature type="active site" evidence="1">
    <location>
        <position position="10"/>
    </location>
</feature>
<feature type="active site" evidence="1">
    <location>
        <position position="141"/>
    </location>
</feature>
<feature type="binding site" evidence="1">
    <location>
        <begin position="99"/>
        <end position="109"/>
    </location>
    <ligand>
        <name>ATP</name>
        <dbReference type="ChEBI" id="CHEBI:30616"/>
    </ligand>
</feature>
<proteinExistence type="inferred from homology"/>
<name>ISPE_SALCH</name>
<gene>
    <name evidence="1" type="primary">ispE</name>
    <name type="ordered locus">SCH_1773</name>
</gene>
<accession>Q57NN2</accession>
<protein>
    <recommendedName>
        <fullName evidence="1">4-diphosphocytidyl-2-C-methyl-D-erythritol kinase</fullName>
        <shortName evidence="1">CMK</shortName>
        <ecNumber evidence="1">2.7.1.148</ecNumber>
    </recommendedName>
    <alternativeName>
        <fullName evidence="1">4-(cytidine-5'-diphospho)-2-C-methyl-D-erythritol kinase</fullName>
    </alternativeName>
</protein>
<sequence length="283" mass="30843">MMTHWPSPAKLNLFLYITGQRADGYHTLQTLFQFLDYGDTLHIEPRHDGEIHLLTPVNGVENEDNLIVRAARLLMKVASESGRLPAGSGADISIEKRLPMGGGLGGGSSNAATVLVALNHLWQCGLSIDELATLGLTLGADVPVFVRGHAAFAEGVGEILTPVNPPEKWYLVAPPGVSLPTPVIFKDPQLPRNTPKRSIDTLLKCEFSNDCEVIARKRFREVDAALSWLLEYAPSRLTGTGACVFAEFDTESCARQVLEQAPEWLNAFVAKGVNLSPLHRELL</sequence>
<reference key="1">
    <citation type="journal article" date="2005" name="Nucleic Acids Res.">
        <title>The genome sequence of Salmonella enterica serovar Choleraesuis, a highly invasive and resistant zoonotic pathogen.</title>
        <authorList>
            <person name="Chiu C.-H."/>
            <person name="Tang P."/>
            <person name="Chu C."/>
            <person name="Hu S."/>
            <person name="Bao Q."/>
            <person name="Yu J."/>
            <person name="Chou Y.-Y."/>
            <person name="Wang H.-S."/>
            <person name="Lee Y.-S."/>
        </authorList>
    </citation>
    <scope>NUCLEOTIDE SEQUENCE [LARGE SCALE GENOMIC DNA]</scope>
    <source>
        <strain>SC-B67</strain>
    </source>
</reference>
<evidence type="ECO:0000255" key="1">
    <source>
        <dbReference type="HAMAP-Rule" id="MF_00061"/>
    </source>
</evidence>
<organism>
    <name type="scientific">Salmonella choleraesuis (strain SC-B67)</name>
    <dbReference type="NCBI Taxonomy" id="321314"/>
    <lineage>
        <taxon>Bacteria</taxon>
        <taxon>Pseudomonadati</taxon>
        <taxon>Pseudomonadota</taxon>
        <taxon>Gammaproteobacteria</taxon>
        <taxon>Enterobacterales</taxon>
        <taxon>Enterobacteriaceae</taxon>
        <taxon>Salmonella</taxon>
    </lineage>
</organism>
<comment type="function">
    <text evidence="1">Catalyzes the phosphorylation of the position 2 hydroxy group of 4-diphosphocytidyl-2C-methyl-D-erythritol.</text>
</comment>
<comment type="catalytic activity">
    <reaction evidence="1">
        <text>4-CDP-2-C-methyl-D-erythritol + ATP = 4-CDP-2-C-methyl-D-erythritol 2-phosphate + ADP + H(+)</text>
        <dbReference type="Rhea" id="RHEA:18437"/>
        <dbReference type="ChEBI" id="CHEBI:15378"/>
        <dbReference type="ChEBI" id="CHEBI:30616"/>
        <dbReference type="ChEBI" id="CHEBI:57823"/>
        <dbReference type="ChEBI" id="CHEBI:57919"/>
        <dbReference type="ChEBI" id="CHEBI:456216"/>
        <dbReference type="EC" id="2.7.1.148"/>
    </reaction>
</comment>
<comment type="pathway">
    <text evidence="1">Isoprenoid biosynthesis; isopentenyl diphosphate biosynthesis via DXP pathway; isopentenyl diphosphate from 1-deoxy-D-xylulose 5-phosphate: step 3/6.</text>
</comment>
<comment type="subunit">
    <text evidence="1">Homodimer.</text>
</comment>
<comment type="similarity">
    <text evidence="1">Belongs to the GHMP kinase family. IspE subfamily.</text>
</comment>
<keyword id="KW-0067">ATP-binding</keyword>
<keyword id="KW-0414">Isoprene biosynthesis</keyword>
<keyword id="KW-0418">Kinase</keyword>
<keyword id="KW-0547">Nucleotide-binding</keyword>
<keyword id="KW-0808">Transferase</keyword>